<evidence type="ECO:0000255" key="1">
    <source>
        <dbReference type="HAMAP-Rule" id="MF_00294"/>
    </source>
</evidence>
<proteinExistence type="inferred from homology"/>
<gene>
    <name evidence="1" type="primary">rpmG1</name>
    <name type="ordered locus">SaurJH9_0557</name>
</gene>
<sequence length="47" mass="5375">MRKIPLNCEACGNRNYNVPKQEGSATRLTLKKYCPKCNAHTIHKESK</sequence>
<dbReference type="EMBL" id="CP000703">
    <property type="protein sequence ID" value="ABQ48361.1"/>
    <property type="molecule type" value="Genomic_DNA"/>
</dbReference>
<dbReference type="SMR" id="A5IQ88"/>
<dbReference type="KEGG" id="saj:SaurJH9_0557"/>
<dbReference type="HOGENOM" id="CLU_190949_0_1_9"/>
<dbReference type="GO" id="GO:0005737">
    <property type="term" value="C:cytoplasm"/>
    <property type="evidence" value="ECO:0007669"/>
    <property type="project" value="UniProtKB-ARBA"/>
</dbReference>
<dbReference type="GO" id="GO:1990904">
    <property type="term" value="C:ribonucleoprotein complex"/>
    <property type="evidence" value="ECO:0007669"/>
    <property type="project" value="UniProtKB-KW"/>
</dbReference>
<dbReference type="GO" id="GO:0005840">
    <property type="term" value="C:ribosome"/>
    <property type="evidence" value="ECO:0007669"/>
    <property type="project" value="UniProtKB-KW"/>
</dbReference>
<dbReference type="GO" id="GO:0003735">
    <property type="term" value="F:structural constituent of ribosome"/>
    <property type="evidence" value="ECO:0007669"/>
    <property type="project" value="InterPro"/>
</dbReference>
<dbReference type="GO" id="GO:0006412">
    <property type="term" value="P:translation"/>
    <property type="evidence" value="ECO:0007669"/>
    <property type="project" value="UniProtKB-UniRule"/>
</dbReference>
<dbReference type="Gene3D" id="2.20.28.120">
    <property type="entry name" value="Ribosomal protein L33"/>
    <property type="match status" value="1"/>
</dbReference>
<dbReference type="HAMAP" id="MF_00294">
    <property type="entry name" value="Ribosomal_bL33"/>
    <property type="match status" value="1"/>
</dbReference>
<dbReference type="InterPro" id="IPR001705">
    <property type="entry name" value="Ribosomal_bL33"/>
</dbReference>
<dbReference type="InterPro" id="IPR018264">
    <property type="entry name" value="Ribosomal_bL33_CS"/>
</dbReference>
<dbReference type="InterPro" id="IPR038584">
    <property type="entry name" value="Ribosomal_bL33_sf"/>
</dbReference>
<dbReference type="InterPro" id="IPR011332">
    <property type="entry name" value="Ribosomal_zn-bd"/>
</dbReference>
<dbReference type="NCBIfam" id="NF001764">
    <property type="entry name" value="PRK00504.1"/>
    <property type="match status" value="1"/>
</dbReference>
<dbReference type="NCBIfam" id="TIGR01023">
    <property type="entry name" value="rpmG_bact"/>
    <property type="match status" value="1"/>
</dbReference>
<dbReference type="Pfam" id="PF00471">
    <property type="entry name" value="Ribosomal_L33"/>
    <property type="match status" value="1"/>
</dbReference>
<dbReference type="SUPFAM" id="SSF57829">
    <property type="entry name" value="Zn-binding ribosomal proteins"/>
    <property type="match status" value="1"/>
</dbReference>
<dbReference type="PROSITE" id="PS00582">
    <property type="entry name" value="RIBOSOMAL_L33"/>
    <property type="match status" value="1"/>
</dbReference>
<keyword id="KW-0687">Ribonucleoprotein</keyword>
<keyword id="KW-0689">Ribosomal protein</keyword>
<accession>A5IQ88</accession>
<comment type="similarity">
    <text evidence="1">Belongs to the bacterial ribosomal protein bL33 family.</text>
</comment>
<organism>
    <name type="scientific">Staphylococcus aureus (strain JH9)</name>
    <dbReference type="NCBI Taxonomy" id="359786"/>
    <lineage>
        <taxon>Bacteria</taxon>
        <taxon>Bacillati</taxon>
        <taxon>Bacillota</taxon>
        <taxon>Bacilli</taxon>
        <taxon>Bacillales</taxon>
        <taxon>Staphylococcaceae</taxon>
        <taxon>Staphylococcus</taxon>
    </lineage>
</organism>
<protein>
    <recommendedName>
        <fullName evidence="1">Large ribosomal subunit protein bL33A</fullName>
    </recommendedName>
    <alternativeName>
        <fullName evidence="1">50S ribosomal protein L33 1</fullName>
    </alternativeName>
</protein>
<feature type="chain" id="PRO_0000356684" description="Large ribosomal subunit protein bL33A">
    <location>
        <begin position="1"/>
        <end position="47"/>
    </location>
</feature>
<reference key="1">
    <citation type="submission" date="2007-05" db="EMBL/GenBank/DDBJ databases">
        <title>Complete sequence of chromosome of Staphylococcus aureus subsp. aureus JH9.</title>
        <authorList>
            <consortium name="US DOE Joint Genome Institute"/>
            <person name="Copeland A."/>
            <person name="Lucas S."/>
            <person name="Lapidus A."/>
            <person name="Barry K."/>
            <person name="Detter J.C."/>
            <person name="Glavina del Rio T."/>
            <person name="Hammon N."/>
            <person name="Israni S."/>
            <person name="Pitluck S."/>
            <person name="Chain P."/>
            <person name="Malfatti S."/>
            <person name="Shin M."/>
            <person name="Vergez L."/>
            <person name="Schmutz J."/>
            <person name="Larimer F."/>
            <person name="Land M."/>
            <person name="Hauser L."/>
            <person name="Kyrpides N."/>
            <person name="Kim E."/>
            <person name="Tomasz A."/>
            <person name="Richardson P."/>
        </authorList>
    </citation>
    <scope>NUCLEOTIDE SEQUENCE [LARGE SCALE GENOMIC DNA]</scope>
    <source>
        <strain>JH9</strain>
    </source>
</reference>
<name>RL331_STAA9</name>